<comment type="function">
    <text evidence="1">Cell surface-associated calcium-binding protein which plays an important role in adhesion and pathogenesis. Mediates interactions with components of the extracellular matrix such as host NRXN1 to promote bacterial adhesion.</text>
</comment>
<comment type="subunit">
    <text evidence="1">Homodimerizes; via N2-Domain. Interacts with host NRXN1; this interaction mediates bacterial attachment to host cells.</text>
</comment>
<comment type="subcellular location">
    <subcellularLocation>
        <location evidence="3">Secreted</location>
        <location evidence="3">Cell wall</location>
        <topology evidence="3">Peptidoglycan-anchor</topology>
    </subcellularLocation>
</comment>
<comment type="disruption phenotype">
    <text evidence="5">Bacteria no longer enhance SARS-CoV-2 replication in host (green monkey kidney Vero E6 cells) cells. Note the phenotype is not restored by wild-type protein.</text>
</comment>
<comment type="similarity">
    <text evidence="6">Belongs to the serine-aspartate repeat-containing protein (SDr) family.</text>
</comment>
<organism>
    <name type="scientific">Staphylococcus aureus (strain USA300)</name>
    <dbReference type="NCBI Taxonomy" id="367830"/>
    <lineage>
        <taxon>Bacteria</taxon>
        <taxon>Bacillati</taxon>
        <taxon>Bacillota</taxon>
        <taxon>Bacilli</taxon>
        <taxon>Bacillales</taxon>
        <taxon>Staphylococcaceae</taxon>
        <taxon>Staphylococcus</taxon>
    </lineage>
</organism>
<reference key="1">
    <citation type="journal article" date="2006" name="Lancet">
        <title>Complete genome sequence of USA300, an epidemic clone of community-acquired meticillin-resistant Staphylococcus aureus.</title>
        <authorList>
            <person name="Diep B.A."/>
            <person name="Gill S.R."/>
            <person name="Chang R.F."/>
            <person name="Phan T.H."/>
            <person name="Chen J.H."/>
            <person name="Davidson M.G."/>
            <person name="Lin F."/>
            <person name="Lin J."/>
            <person name="Carleton H.A."/>
            <person name="Mongodin E.F."/>
            <person name="Sensabaugh G.F."/>
            <person name="Perdreau-Remington F."/>
        </authorList>
    </citation>
    <scope>NUCLEOTIDE SEQUENCE [LARGE SCALE GENOMIC DNA]</scope>
    <source>
        <strain>USA300</strain>
    </source>
</reference>
<reference key="2">
    <citation type="journal article" date="2023" name="IScience">
        <title>The Staphylococcus aureus protein IsdA increases SARS CoV-2 replication by modulating JAK-STAT signaling.</title>
        <authorList>
            <person name="Goncheva M.I."/>
            <person name="Gibson R.M."/>
            <person name="Shouldice A.C."/>
            <person name="Dikeakos J.D."/>
            <person name="Heinrichs D.E."/>
        </authorList>
    </citation>
    <scope>DISRUPTION PHENOTYPE</scope>
    <source>
        <strain>USA300 / LAC</strain>
    </source>
</reference>
<dbReference type="EMBL" id="CP000255">
    <property type="protein sequence ID" value="ABD21592.1"/>
    <property type="molecule type" value="Genomic_DNA"/>
</dbReference>
<dbReference type="RefSeq" id="WP_001060483.1">
    <property type="nucleotide sequence ID" value="NZ_CP027476.1"/>
</dbReference>
<dbReference type="SMR" id="Q2FJ79"/>
<dbReference type="KEGG" id="saa:SAUSA300_0546"/>
<dbReference type="HOGENOM" id="CLU_004137_1_2_9"/>
<dbReference type="OMA" id="YDYTVTN"/>
<dbReference type="PRO" id="PR:Q2FJ79"/>
<dbReference type="Proteomes" id="UP000001939">
    <property type="component" value="Chromosome"/>
</dbReference>
<dbReference type="GO" id="GO:0005576">
    <property type="term" value="C:extracellular region"/>
    <property type="evidence" value="ECO:0007669"/>
    <property type="project" value="UniProtKB-KW"/>
</dbReference>
<dbReference type="GO" id="GO:0007155">
    <property type="term" value="P:cell adhesion"/>
    <property type="evidence" value="ECO:0007669"/>
    <property type="project" value="InterPro"/>
</dbReference>
<dbReference type="Gene3D" id="2.60.40.1280">
    <property type="match status" value="1"/>
</dbReference>
<dbReference type="Gene3D" id="2.60.40.1290">
    <property type="match status" value="1"/>
</dbReference>
<dbReference type="Gene3D" id="2.60.40.10">
    <property type="entry name" value="Immunoglobulins"/>
    <property type="match status" value="2"/>
</dbReference>
<dbReference type="InterPro" id="IPR011266">
    <property type="entry name" value="Adhesin_Fg-bd_dom_2"/>
</dbReference>
<dbReference type="InterPro" id="IPR008966">
    <property type="entry name" value="Adhesion_dom_sf"/>
</dbReference>
<dbReference type="InterPro" id="IPR011252">
    <property type="entry name" value="Fibrogen-bd_dom1"/>
</dbReference>
<dbReference type="InterPro" id="IPR013783">
    <property type="entry name" value="Ig-like_fold"/>
</dbReference>
<dbReference type="InterPro" id="IPR019931">
    <property type="entry name" value="LPXTG_anchor"/>
</dbReference>
<dbReference type="InterPro" id="IPR050972">
    <property type="entry name" value="SDr-like"/>
</dbReference>
<dbReference type="InterPro" id="IPR033764">
    <property type="entry name" value="Sdr_B"/>
</dbReference>
<dbReference type="InterPro" id="IPR041171">
    <property type="entry name" value="SDR_Ig"/>
</dbReference>
<dbReference type="InterPro" id="IPR005877">
    <property type="entry name" value="YSIRK_signal_dom"/>
</dbReference>
<dbReference type="NCBIfam" id="TIGR01167">
    <property type="entry name" value="LPXTG_anchor"/>
    <property type="match status" value="1"/>
</dbReference>
<dbReference type="NCBIfam" id="NF000535">
    <property type="entry name" value="MSCRAMM_SdrC"/>
    <property type="match status" value="1"/>
</dbReference>
<dbReference type="NCBIfam" id="TIGR01168">
    <property type="entry name" value="YSIRK_signal"/>
    <property type="match status" value="1"/>
</dbReference>
<dbReference type="PANTHER" id="PTHR34403">
    <property type="entry name" value="TOL-PAL SYSTEM PROTEIN TOLA"/>
    <property type="match status" value="1"/>
</dbReference>
<dbReference type="PANTHER" id="PTHR34403:SF8">
    <property type="entry name" value="TOL-PAL SYSTEM PROTEIN TOLA"/>
    <property type="match status" value="1"/>
</dbReference>
<dbReference type="Pfam" id="PF17961">
    <property type="entry name" value="Big_8"/>
    <property type="match status" value="1"/>
</dbReference>
<dbReference type="Pfam" id="PF00746">
    <property type="entry name" value="Gram_pos_anchor"/>
    <property type="match status" value="1"/>
</dbReference>
<dbReference type="Pfam" id="PF17210">
    <property type="entry name" value="SdrD_B"/>
    <property type="match status" value="2"/>
</dbReference>
<dbReference type="Pfam" id="PF10425">
    <property type="entry name" value="SdrG_C_C"/>
    <property type="match status" value="1"/>
</dbReference>
<dbReference type="Pfam" id="PF04650">
    <property type="entry name" value="YSIRK_signal"/>
    <property type="match status" value="1"/>
</dbReference>
<dbReference type="SUPFAM" id="SSF49401">
    <property type="entry name" value="Bacterial adhesins"/>
    <property type="match status" value="2"/>
</dbReference>
<dbReference type="SUPFAM" id="SSF117074">
    <property type="entry name" value="Hypothetical protein PA1324"/>
    <property type="match status" value="2"/>
</dbReference>
<dbReference type="PROSITE" id="PS50847">
    <property type="entry name" value="GRAM_POS_ANCHORING"/>
    <property type="match status" value="1"/>
</dbReference>
<proteinExistence type="inferred from homology"/>
<protein>
    <recommendedName>
        <fullName>Serine-aspartate repeat-containing protein C</fullName>
    </recommendedName>
</protein>
<accession>Q2FJ79</accession>
<evidence type="ECO:0000250" key="1">
    <source>
        <dbReference type="UniProtKB" id="O86487"/>
    </source>
</evidence>
<evidence type="ECO:0000255" key="2"/>
<evidence type="ECO:0000255" key="3">
    <source>
        <dbReference type="PROSITE-ProRule" id="PRU00477"/>
    </source>
</evidence>
<evidence type="ECO:0000256" key="4">
    <source>
        <dbReference type="SAM" id="MobiDB-lite"/>
    </source>
</evidence>
<evidence type="ECO:0000269" key="5">
    <source>
    </source>
</evidence>
<evidence type="ECO:0000305" key="6"/>
<gene>
    <name type="primary">sdrC</name>
    <name type="ordered locus">SAUSA300_0546</name>
</gene>
<sequence length="947" mass="102928">MNNKKTATNRKGMIPNRLNKFSIRKYSVGTASILVGTTLIFGLSGHEAKAAEHTNGELNQSKNETTAPSENKTTKKVDSRQLKDNTQTATADQPKVTMSDSATVKETSSNMQSPQNATANQSTTKTSNVTTNDKSSTTYSNETDKSNLTQAKDVSTTPKTTTIKPRTLNRMAVNTVAAPQQGTNVNDKVHFSNIDIAIDKGHVNQTTGKTEFWATSSDVLKLKANYTIDDSVKEGDIFTFKYGQYFRPGSVRLPSQTQNLYNAQGNIIAKGIYDSTTNTTTYTFTNYVDQYTNVRGSFEQVAFAKRKNATTDKTAYKMEVTLGNDTYSEEIIVDYGNKKAQPLISSTNYINNEDLSRNMTAYVNQPKNTYTKQTFVTNLTGYKFNPNAKNFKIYEVTDQNQFVDSFTPDTSKLKDVTDQFDVIYSNDNKTATVDLMKGQTSSNKQYIIQQVAYPDNSSTDNGKIDYTLDTDKTKYSWSNSYSNVNGSSTANGDQKKYNLGDYVWEDTNKDGKQDANEKGIKGVYVILKDSNGKELDRTTTDENGKYQFTGLSNGTYSVEFSTPAGYTPTTANVGTDDAVDSDGLTTTGVIKDADNMTLDSGFYKTPKYSLGDYVWYDSNKDGKQDSTEKGIKGVKVTLQNEKGEVIGTTETDENGKYRFDNLDSGKYKVIFEKPAGLTQTGTNTTEDDKDADGGEVDVTITDHDDFTLDNGYYEEETSDSDSDSDSDSDSDSDSDSDSDSDSDSDSDSDSDSDSDSDSDSDSDSDSDSDSDSDSDSDSDSDSDSDSDSDSDSDSDSDSDSDSDSDSDSDSDSDSDSDSDSDSDSDSDSDSDSDSDSDSDSDSDSDSDSDSDSDSDSDSDSDSDSDSDSDSDSDSDNDSDSDSDSDSDAGKHTPAKPMSTVKDQHKTAKALPETGSENNNSNNGTLFGGLFAALGSLLLFGRRKKQNK</sequence>
<name>SDRC_STAA3</name>
<feature type="signal peptide" evidence="2">
    <location>
        <begin position="1"/>
        <end position="50"/>
    </location>
</feature>
<feature type="chain" id="PRO_0000281386" description="Serine-aspartate repeat-containing protein C">
    <location>
        <begin position="51"/>
        <end position="913"/>
    </location>
</feature>
<feature type="propeptide" id="PRO_0000281387" description="Removed by sortase" evidence="3">
    <location>
        <begin position="914"/>
        <end position="947"/>
    </location>
</feature>
<feature type="domain" description="CNA-B 1">
    <location>
        <begin position="496"/>
        <end position="606"/>
    </location>
</feature>
<feature type="domain" description="CNA-B 2">
    <location>
        <begin position="607"/>
        <end position="717"/>
    </location>
</feature>
<feature type="region of interest" description="Ligand binding A region">
    <location>
        <begin position="51"/>
        <end position="495"/>
    </location>
</feature>
<feature type="region of interest" description="Disordered" evidence="4">
    <location>
        <begin position="51"/>
        <end position="164"/>
    </location>
</feature>
<feature type="region of interest" description="Disordered" evidence="4">
    <location>
        <begin position="678"/>
        <end position="927"/>
    </location>
</feature>
<feature type="short sequence motif" description="LPXTG sorting signal" evidence="3">
    <location>
        <begin position="910"/>
        <end position="914"/>
    </location>
</feature>
<feature type="compositionally biased region" description="Polar residues" evidence="4">
    <location>
        <begin position="56"/>
        <end position="71"/>
    </location>
</feature>
<feature type="compositionally biased region" description="Basic and acidic residues" evidence="4">
    <location>
        <begin position="72"/>
        <end position="83"/>
    </location>
</feature>
<feature type="compositionally biased region" description="Polar residues" evidence="4">
    <location>
        <begin position="84"/>
        <end position="155"/>
    </location>
</feature>
<feature type="compositionally biased region" description="Acidic residues" evidence="4">
    <location>
        <begin position="685"/>
        <end position="695"/>
    </location>
</feature>
<feature type="compositionally biased region" description="Acidic residues" evidence="4">
    <location>
        <begin position="712"/>
        <end position="886"/>
    </location>
</feature>
<feature type="compositionally biased region" description="Low complexity" evidence="4">
    <location>
        <begin position="912"/>
        <end position="927"/>
    </location>
</feature>
<feature type="modified residue" description="Pentaglycyl murein peptidoglycan amidated threonine" evidence="3">
    <location>
        <position position="913"/>
    </location>
</feature>
<keyword id="KW-0106">Calcium</keyword>
<keyword id="KW-0134">Cell wall</keyword>
<keyword id="KW-0572">Peptidoglycan-anchor</keyword>
<keyword id="KW-0677">Repeat</keyword>
<keyword id="KW-0964">Secreted</keyword>
<keyword id="KW-0732">Signal</keyword>